<comment type="function">
    <text evidence="1 5">Acts as an effector of RABF2A and RABF2B (By similarity). Involved in vacuolar transport of storage proteins. Regulates membrane trafficking to protein storage vacuoles (PSVs) (PubMed:27288222). Binds specifically to phosphatidylinositol 3-monophosphate (PtdIns3P) (By similarity).</text>
</comment>
<comment type="subcellular location">
    <subcellularLocation>
        <location evidence="5">Cytoplasm</location>
        <location evidence="5">Cytosol</location>
    </subcellularLocation>
    <subcellularLocation>
        <location evidence="5">Endosome membrane</location>
        <topology evidence="7">Peripheral membrane protein</topology>
    </subcellularLocation>
    <text evidence="5">The endosomal localization depends on the active state of RABF2B.</text>
</comment>
<comment type="disruption phenotype">
    <text evidence="5">No visible phenotype under normal growth conditions, but the double mutant plants erex and erel1 exhibit severe growth retardation at a juvenile stage.</text>
</comment>
<comment type="sequence caution" evidence="7">
    <conflict type="frameshift">
        <sequence resource="EMBL-CDS" id="AAL24093"/>
    </conflict>
</comment>
<comment type="sequence caution" evidence="7">
    <conflict type="erroneous gene model prediction">
        <sequence resource="EMBL-CDS" id="CAA16573"/>
    </conflict>
</comment>
<comment type="sequence caution" evidence="7">
    <conflict type="erroneous gene model prediction">
        <sequence resource="EMBL-CDS" id="CAB79934"/>
    </conflict>
</comment>
<evidence type="ECO:0000250" key="1">
    <source>
        <dbReference type="UniProtKB" id="Q9LSB9"/>
    </source>
</evidence>
<evidence type="ECO:0000255" key="2"/>
<evidence type="ECO:0000255" key="3">
    <source>
        <dbReference type="PROSITE-ProRule" id="PRU00147"/>
    </source>
</evidence>
<evidence type="ECO:0000256" key="4">
    <source>
        <dbReference type="SAM" id="MobiDB-lite"/>
    </source>
</evidence>
<evidence type="ECO:0000269" key="5">
    <source>
    </source>
</evidence>
<evidence type="ECO:0000303" key="6">
    <source>
    </source>
</evidence>
<evidence type="ECO:0000305" key="7"/>
<evidence type="ECO:0000312" key="8">
    <source>
        <dbReference type="Araport" id="AT4G32160"/>
    </source>
</evidence>
<evidence type="ECO:0000312" key="9">
    <source>
        <dbReference type="EMBL" id="CAA16573.1"/>
    </source>
</evidence>
<dbReference type="EMBL" id="AL021636">
    <property type="protein sequence ID" value="CAA16573.1"/>
    <property type="status" value="ALT_SEQ"/>
    <property type="molecule type" value="Genomic_DNA"/>
</dbReference>
<dbReference type="EMBL" id="AL161580">
    <property type="protein sequence ID" value="CAB79934.1"/>
    <property type="status" value="ALT_SEQ"/>
    <property type="molecule type" value="Genomic_DNA"/>
</dbReference>
<dbReference type="EMBL" id="CP002687">
    <property type="protein sequence ID" value="AEE86012.1"/>
    <property type="molecule type" value="Genomic_DNA"/>
</dbReference>
<dbReference type="EMBL" id="AY059745">
    <property type="protein sequence ID" value="AAL24093.1"/>
    <property type="status" value="ALT_FRAME"/>
    <property type="molecule type" value="mRNA"/>
</dbReference>
<dbReference type="PIR" id="T04629">
    <property type="entry name" value="T04629"/>
</dbReference>
<dbReference type="RefSeq" id="NP_567888.2">
    <property type="nucleotide sequence ID" value="NM_119368.3"/>
</dbReference>
<dbReference type="SMR" id="F4JTJ2"/>
<dbReference type="FunCoup" id="F4JTJ2">
    <property type="interactions" value="1178"/>
</dbReference>
<dbReference type="STRING" id="3702.F4JTJ2"/>
<dbReference type="PaxDb" id="3702-AT4G32160.1"/>
<dbReference type="ProteomicsDB" id="221806"/>
<dbReference type="EnsemblPlants" id="AT4G32160.1">
    <property type="protein sequence ID" value="AT4G32160.1"/>
    <property type="gene ID" value="AT4G32160"/>
</dbReference>
<dbReference type="GeneID" id="829348"/>
<dbReference type="Gramene" id="AT4G32160.1">
    <property type="protein sequence ID" value="AT4G32160.1"/>
    <property type="gene ID" value="AT4G32160"/>
</dbReference>
<dbReference type="KEGG" id="ath:AT4G32160"/>
<dbReference type="Araport" id="AT4G32160"/>
<dbReference type="TAIR" id="AT4G32160"/>
<dbReference type="eggNOG" id="ENOG502QVII">
    <property type="taxonomic scope" value="Eukaryota"/>
</dbReference>
<dbReference type="HOGENOM" id="CLU_010605_0_0_1"/>
<dbReference type="InParanoid" id="F4JTJ2"/>
<dbReference type="OMA" id="KHGMSNI"/>
<dbReference type="PRO" id="PR:F4JTJ2"/>
<dbReference type="Proteomes" id="UP000006548">
    <property type="component" value="Chromosome 4"/>
</dbReference>
<dbReference type="ExpressionAtlas" id="F4JTJ2">
    <property type="expression patterns" value="baseline and differential"/>
</dbReference>
<dbReference type="GO" id="GO:0005737">
    <property type="term" value="C:cytoplasm"/>
    <property type="evidence" value="ECO:0000314"/>
    <property type="project" value="UniProtKB"/>
</dbReference>
<dbReference type="GO" id="GO:0005829">
    <property type="term" value="C:cytosol"/>
    <property type="evidence" value="ECO:0007669"/>
    <property type="project" value="UniProtKB-SubCell"/>
</dbReference>
<dbReference type="GO" id="GO:0010008">
    <property type="term" value="C:endosome membrane"/>
    <property type="evidence" value="ECO:0000314"/>
    <property type="project" value="UniProtKB"/>
</dbReference>
<dbReference type="GO" id="GO:0035091">
    <property type="term" value="F:phosphatidylinositol binding"/>
    <property type="evidence" value="ECO:0007669"/>
    <property type="project" value="InterPro"/>
</dbReference>
<dbReference type="GO" id="GO:0015031">
    <property type="term" value="P:protein transport"/>
    <property type="evidence" value="ECO:0000315"/>
    <property type="project" value="UniProtKB"/>
</dbReference>
<dbReference type="FunFam" id="3.30.1520.10:FF:000060">
    <property type="entry name" value="Phox (PX) domain-containing protein"/>
    <property type="match status" value="1"/>
</dbReference>
<dbReference type="Gene3D" id="3.30.1520.10">
    <property type="entry name" value="Phox-like domain"/>
    <property type="match status" value="1"/>
</dbReference>
<dbReference type="InterPro" id="IPR044588">
    <property type="entry name" value="EREX-like"/>
</dbReference>
<dbReference type="InterPro" id="IPR001683">
    <property type="entry name" value="PX_dom"/>
</dbReference>
<dbReference type="InterPro" id="IPR036871">
    <property type="entry name" value="PX_dom_sf"/>
</dbReference>
<dbReference type="PANTHER" id="PTHR46856">
    <property type="entry name" value="PX DOMAIN-CONTAINING PROTEIN EREL1-RELATED"/>
    <property type="match status" value="1"/>
</dbReference>
<dbReference type="PANTHER" id="PTHR46856:SF1">
    <property type="entry name" value="PX DOMAIN-CONTAINING PROTEIN EREL1-RELATED"/>
    <property type="match status" value="1"/>
</dbReference>
<dbReference type="Pfam" id="PF00787">
    <property type="entry name" value="PX"/>
    <property type="match status" value="1"/>
</dbReference>
<dbReference type="SMART" id="SM00312">
    <property type="entry name" value="PX"/>
    <property type="match status" value="1"/>
</dbReference>
<dbReference type="SUPFAM" id="SSF64268">
    <property type="entry name" value="PX domain"/>
    <property type="match status" value="1"/>
</dbReference>
<dbReference type="PROSITE" id="PS50195">
    <property type="entry name" value="PX"/>
    <property type="match status" value="1"/>
</dbReference>
<organism>
    <name type="scientific">Arabidopsis thaliana</name>
    <name type="common">Mouse-ear cress</name>
    <dbReference type="NCBI Taxonomy" id="3702"/>
    <lineage>
        <taxon>Eukaryota</taxon>
        <taxon>Viridiplantae</taxon>
        <taxon>Streptophyta</taxon>
        <taxon>Embryophyta</taxon>
        <taxon>Tracheophyta</taxon>
        <taxon>Spermatophyta</taxon>
        <taxon>Magnoliopsida</taxon>
        <taxon>eudicotyledons</taxon>
        <taxon>Gunneridae</taxon>
        <taxon>Pentapetalae</taxon>
        <taxon>rosids</taxon>
        <taxon>malvids</taxon>
        <taxon>Brassicales</taxon>
        <taxon>Brassicaceae</taxon>
        <taxon>Camelineae</taxon>
        <taxon>Arabidopsis</taxon>
    </lineage>
</organism>
<reference key="1">
    <citation type="journal article" date="1999" name="Nature">
        <title>Sequence and analysis of chromosome 4 of the plant Arabidopsis thaliana.</title>
        <authorList>
            <person name="Mayer K.F.X."/>
            <person name="Schueller C."/>
            <person name="Wambutt R."/>
            <person name="Murphy G."/>
            <person name="Volckaert G."/>
            <person name="Pohl T."/>
            <person name="Duesterhoeft A."/>
            <person name="Stiekema W."/>
            <person name="Entian K.-D."/>
            <person name="Terryn N."/>
            <person name="Harris B."/>
            <person name="Ansorge W."/>
            <person name="Brandt P."/>
            <person name="Grivell L.A."/>
            <person name="Rieger M."/>
            <person name="Weichselgartner M."/>
            <person name="de Simone V."/>
            <person name="Obermaier B."/>
            <person name="Mache R."/>
            <person name="Mueller M."/>
            <person name="Kreis M."/>
            <person name="Delseny M."/>
            <person name="Puigdomenech P."/>
            <person name="Watson M."/>
            <person name="Schmidtheini T."/>
            <person name="Reichert B."/>
            <person name="Portetelle D."/>
            <person name="Perez-Alonso M."/>
            <person name="Boutry M."/>
            <person name="Bancroft I."/>
            <person name="Vos P."/>
            <person name="Hoheisel J."/>
            <person name="Zimmermann W."/>
            <person name="Wedler H."/>
            <person name="Ridley P."/>
            <person name="Langham S.-A."/>
            <person name="McCullagh B."/>
            <person name="Bilham L."/>
            <person name="Robben J."/>
            <person name="van der Schueren J."/>
            <person name="Grymonprez B."/>
            <person name="Chuang Y.-J."/>
            <person name="Vandenbussche F."/>
            <person name="Braeken M."/>
            <person name="Weltjens I."/>
            <person name="Voet M."/>
            <person name="Bastiaens I."/>
            <person name="Aert R."/>
            <person name="Defoor E."/>
            <person name="Weitzenegger T."/>
            <person name="Bothe G."/>
            <person name="Ramsperger U."/>
            <person name="Hilbert H."/>
            <person name="Braun M."/>
            <person name="Holzer E."/>
            <person name="Brandt A."/>
            <person name="Peters S."/>
            <person name="van Staveren M."/>
            <person name="Dirkse W."/>
            <person name="Mooijman P."/>
            <person name="Klein Lankhorst R."/>
            <person name="Rose M."/>
            <person name="Hauf J."/>
            <person name="Koetter P."/>
            <person name="Berneiser S."/>
            <person name="Hempel S."/>
            <person name="Feldpausch M."/>
            <person name="Lamberth S."/>
            <person name="Van den Daele H."/>
            <person name="De Keyser A."/>
            <person name="Buysshaert C."/>
            <person name="Gielen J."/>
            <person name="Villarroel R."/>
            <person name="De Clercq R."/>
            <person name="van Montagu M."/>
            <person name="Rogers J."/>
            <person name="Cronin A."/>
            <person name="Quail M.A."/>
            <person name="Bray-Allen S."/>
            <person name="Clark L."/>
            <person name="Doggett J."/>
            <person name="Hall S."/>
            <person name="Kay M."/>
            <person name="Lennard N."/>
            <person name="McLay K."/>
            <person name="Mayes R."/>
            <person name="Pettett A."/>
            <person name="Rajandream M.A."/>
            <person name="Lyne M."/>
            <person name="Benes V."/>
            <person name="Rechmann S."/>
            <person name="Borkova D."/>
            <person name="Bloecker H."/>
            <person name="Scharfe M."/>
            <person name="Grimm M."/>
            <person name="Loehnert T.-H."/>
            <person name="Dose S."/>
            <person name="de Haan M."/>
            <person name="Maarse A.C."/>
            <person name="Schaefer M."/>
            <person name="Mueller-Auer S."/>
            <person name="Gabel C."/>
            <person name="Fuchs M."/>
            <person name="Fartmann B."/>
            <person name="Granderath K."/>
            <person name="Dauner D."/>
            <person name="Herzl A."/>
            <person name="Neumann S."/>
            <person name="Argiriou A."/>
            <person name="Vitale D."/>
            <person name="Liguori R."/>
            <person name="Piravandi E."/>
            <person name="Massenet O."/>
            <person name="Quigley F."/>
            <person name="Clabauld G."/>
            <person name="Muendlein A."/>
            <person name="Felber R."/>
            <person name="Schnabl S."/>
            <person name="Hiller R."/>
            <person name="Schmidt W."/>
            <person name="Lecharny A."/>
            <person name="Aubourg S."/>
            <person name="Chefdor F."/>
            <person name="Cooke R."/>
            <person name="Berger C."/>
            <person name="Monfort A."/>
            <person name="Casacuberta E."/>
            <person name="Gibbons T."/>
            <person name="Weber N."/>
            <person name="Vandenbol M."/>
            <person name="Bargues M."/>
            <person name="Terol J."/>
            <person name="Torres A."/>
            <person name="Perez-Perez A."/>
            <person name="Purnelle B."/>
            <person name="Bent E."/>
            <person name="Johnson S."/>
            <person name="Tacon D."/>
            <person name="Jesse T."/>
            <person name="Heijnen L."/>
            <person name="Schwarz S."/>
            <person name="Scholler P."/>
            <person name="Heber S."/>
            <person name="Francs P."/>
            <person name="Bielke C."/>
            <person name="Frishman D."/>
            <person name="Haase D."/>
            <person name="Lemcke K."/>
            <person name="Mewes H.-W."/>
            <person name="Stocker S."/>
            <person name="Zaccaria P."/>
            <person name="Bevan M."/>
            <person name="Wilson R.K."/>
            <person name="de la Bastide M."/>
            <person name="Habermann K."/>
            <person name="Parnell L."/>
            <person name="Dedhia N."/>
            <person name="Gnoj L."/>
            <person name="Schutz K."/>
            <person name="Huang E."/>
            <person name="Spiegel L."/>
            <person name="Sekhon M."/>
            <person name="Murray J."/>
            <person name="Sheet P."/>
            <person name="Cordes M."/>
            <person name="Abu-Threideh J."/>
            <person name="Stoneking T."/>
            <person name="Kalicki J."/>
            <person name="Graves T."/>
            <person name="Harmon G."/>
            <person name="Edwards J."/>
            <person name="Latreille P."/>
            <person name="Courtney L."/>
            <person name="Cloud J."/>
            <person name="Abbott A."/>
            <person name="Scott K."/>
            <person name="Johnson D."/>
            <person name="Minx P."/>
            <person name="Bentley D."/>
            <person name="Fulton B."/>
            <person name="Miller N."/>
            <person name="Greco T."/>
            <person name="Kemp K."/>
            <person name="Kramer J."/>
            <person name="Fulton L."/>
            <person name="Mardis E."/>
            <person name="Dante M."/>
            <person name="Pepin K."/>
            <person name="Hillier L.W."/>
            <person name="Nelson J."/>
            <person name="Spieth J."/>
            <person name="Ryan E."/>
            <person name="Andrews S."/>
            <person name="Geisel C."/>
            <person name="Layman D."/>
            <person name="Du H."/>
            <person name="Ali J."/>
            <person name="Berghoff A."/>
            <person name="Jones K."/>
            <person name="Drone K."/>
            <person name="Cotton M."/>
            <person name="Joshu C."/>
            <person name="Antonoiu B."/>
            <person name="Zidanic M."/>
            <person name="Strong C."/>
            <person name="Sun H."/>
            <person name="Lamar B."/>
            <person name="Yordan C."/>
            <person name="Ma P."/>
            <person name="Zhong J."/>
            <person name="Preston R."/>
            <person name="Vil D."/>
            <person name="Shekher M."/>
            <person name="Matero A."/>
            <person name="Shah R."/>
            <person name="Swaby I.K."/>
            <person name="O'Shaughnessy A."/>
            <person name="Rodriguez M."/>
            <person name="Hoffman J."/>
            <person name="Till S."/>
            <person name="Granat S."/>
            <person name="Shohdy N."/>
            <person name="Hasegawa A."/>
            <person name="Hameed A."/>
            <person name="Lodhi M."/>
            <person name="Johnson A."/>
            <person name="Chen E."/>
            <person name="Marra M.A."/>
            <person name="Martienssen R."/>
            <person name="McCombie W.R."/>
        </authorList>
    </citation>
    <scope>NUCLEOTIDE SEQUENCE [LARGE SCALE GENOMIC DNA]</scope>
    <source>
        <strain>cv. Columbia</strain>
    </source>
</reference>
<reference key="2">
    <citation type="journal article" date="2017" name="Plant J.">
        <title>Araport11: a complete reannotation of the Arabidopsis thaliana reference genome.</title>
        <authorList>
            <person name="Cheng C.Y."/>
            <person name="Krishnakumar V."/>
            <person name="Chan A.P."/>
            <person name="Thibaud-Nissen F."/>
            <person name="Schobel S."/>
            <person name="Town C.D."/>
        </authorList>
    </citation>
    <scope>GENOME REANNOTATION</scope>
    <source>
        <strain>cv. Columbia</strain>
    </source>
</reference>
<reference key="3">
    <citation type="journal article" date="2003" name="Science">
        <title>Empirical analysis of transcriptional activity in the Arabidopsis genome.</title>
        <authorList>
            <person name="Yamada K."/>
            <person name="Lim J."/>
            <person name="Dale J.M."/>
            <person name="Chen H."/>
            <person name="Shinn P."/>
            <person name="Palm C.J."/>
            <person name="Southwick A.M."/>
            <person name="Wu H.C."/>
            <person name="Kim C.J."/>
            <person name="Nguyen M."/>
            <person name="Pham P.K."/>
            <person name="Cheuk R.F."/>
            <person name="Karlin-Newmann G."/>
            <person name="Liu S.X."/>
            <person name="Lam B."/>
            <person name="Sakano H."/>
            <person name="Wu T."/>
            <person name="Yu G."/>
            <person name="Miranda M."/>
            <person name="Quach H.L."/>
            <person name="Tripp M."/>
            <person name="Chang C.H."/>
            <person name="Lee J.M."/>
            <person name="Toriumi M.J."/>
            <person name="Chan M.M."/>
            <person name="Tang C.C."/>
            <person name="Onodera C.S."/>
            <person name="Deng J.M."/>
            <person name="Akiyama K."/>
            <person name="Ansari Y."/>
            <person name="Arakawa T."/>
            <person name="Banh J."/>
            <person name="Banno F."/>
            <person name="Bowser L."/>
            <person name="Brooks S.Y."/>
            <person name="Carninci P."/>
            <person name="Chao Q."/>
            <person name="Choy N."/>
            <person name="Enju A."/>
            <person name="Goldsmith A.D."/>
            <person name="Gurjal M."/>
            <person name="Hansen N.F."/>
            <person name="Hayashizaki Y."/>
            <person name="Johnson-Hopson C."/>
            <person name="Hsuan V.W."/>
            <person name="Iida K."/>
            <person name="Karnes M."/>
            <person name="Khan S."/>
            <person name="Koesema E."/>
            <person name="Ishida J."/>
            <person name="Jiang P.X."/>
            <person name="Jones T."/>
            <person name="Kawai J."/>
            <person name="Kamiya A."/>
            <person name="Meyers C."/>
            <person name="Nakajima M."/>
            <person name="Narusaka M."/>
            <person name="Seki M."/>
            <person name="Sakurai T."/>
            <person name="Satou M."/>
            <person name="Tamse R."/>
            <person name="Vaysberg M."/>
            <person name="Wallender E.K."/>
            <person name="Wong C."/>
            <person name="Yamamura Y."/>
            <person name="Yuan S."/>
            <person name="Shinozaki K."/>
            <person name="Davis R.W."/>
            <person name="Theologis A."/>
            <person name="Ecker J.R."/>
        </authorList>
    </citation>
    <scope>NUCLEOTIDE SEQUENCE [LARGE SCALE MRNA]</scope>
    <source>
        <strain>cv. Columbia</strain>
    </source>
</reference>
<reference key="4">
    <citation type="journal article" date="2016" name="Plant Cell">
        <title>ENDOSOMAL RAB EFFECTOR WITH PX-DOMAIN, an interacting partner of RAB5 GTPases, regulates membrane trafficking to protein storage vacuoles in Arabidopsis.</title>
        <authorList>
            <person name="Sakurai H.T."/>
            <person name="Inoue T."/>
            <person name="Nakano A."/>
            <person name="Ueda T."/>
        </authorList>
    </citation>
    <scope>FUNCTION</scope>
    <scope>SUBCELLULAR LOCATION</scope>
    <scope>DISRUPTION PHENOTYPE</scope>
</reference>
<proteinExistence type="evidence at transcript level"/>
<feature type="chain" id="PRO_0000438485" description="PX domain-containing protein EREL1">
    <location>
        <begin position="1"/>
        <end position="723"/>
    </location>
</feature>
<feature type="domain" description="PX" evidence="3">
    <location>
        <begin position="48"/>
        <end position="165"/>
    </location>
</feature>
<feature type="region of interest" description="Disordered" evidence="4">
    <location>
        <begin position="1"/>
        <end position="26"/>
    </location>
</feature>
<feature type="region of interest" description="Disordered" evidence="4">
    <location>
        <begin position="169"/>
        <end position="193"/>
    </location>
</feature>
<feature type="region of interest" description="Disordered" evidence="4">
    <location>
        <begin position="209"/>
        <end position="230"/>
    </location>
</feature>
<feature type="region of interest" description="Disordered" evidence="4">
    <location>
        <begin position="698"/>
        <end position="723"/>
    </location>
</feature>
<feature type="coiled-coil region" evidence="2">
    <location>
        <begin position="401"/>
        <end position="474"/>
    </location>
</feature>
<feature type="coiled-coil region" evidence="2">
    <location>
        <begin position="503"/>
        <end position="555"/>
    </location>
</feature>
<feature type="compositionally biased region" description="Basic residues" evidence="4">
    <location>
        <begin position="1"/>
        <end position="12"/>
    </location>
</feature>
<feature type="compositionally biased region" description="Low complexity" evidence="4">
    <location>
        <begin position="172"/>
        <end position="193"/>
    </location>
</feature>
<feature type="compositionally biased region" description="Polar residues" evidence="4">
    <location>
        <begin position="209"/>
        <end position="225"/>
    </location>
</feature>
<feature type="compositionally biased region" description="Acidic residues" evidence="4">
    <location>
        <begin position="704"/>
        <end position="714"/>
    </location>
</feature>
<feature type="sequence conflict" description="In Ref. 3; AAL24093." evidence="7" ref="3">
    <original>N</original>
    <variation>K</variation>
    <location>
        <position position="646"/>
    </location>
</feature>
<accession>F4JTJ2</accession>
<accession>O49376</accession>
<accession>Q93YV8</accession>
<protein>
    <recommendedName>
        <fullName evidence="7">PX domain-containing protein EREL1</fullName>
    </recommendedName>
    <alternativeName>
        <fullName evidence="6">Protein EREX-like 1</fullName>
    </alternativeName>
</protein>
<keyword id="KW-0175">Coiled coil</keyword>
<keyword id="KW-0963">Cytoplasm</keyword>
<keyword id="KW-0967">Endosome</keyword>
<keyword id="KW-0446">Lipid-binding</keyword>
<keyword id="KW-0472">Membrane</keyword>
<keyword id="KW-0653">Protein transport</keyword>
<keyword id="KW-1185">Reference proteome</keyword>
<keyword id="KW-0813">Transport</keyword>
<gene>
    <name evidence="6" type="primary">EREL1</name>
    <name evidence="8" type="ordered locus">At4g32160</name>
    <name evidence="9" type="ORF">F10N7.30</name>
</gene>
<name>EREL1_ARATH</name>
<sequence length="723" mass="81811">MMQRRSPPKHRHDGTSPLPLGMDWSPPPRKWNGRDTVWPHDPRTGWSYCVTIPSWIVLPKSRNSDPVVFYRVQVSVQSPEGITTMRGVLRRFNDFLKLLTDLKRTFPRKGFPSAPPKGLLRMKSRAVLEERRCSLEEWITKLLSDIELARSVVVASFLELEAAARSACQDVDQNASDSNNDRSSTSSSPMVHPSLSLFHAGGSTLTSDYGSDTAYETSEVGSPSVGQDDISEIGTEDLTLDEDLTLTNPIEKLVNFSMSNIDEGLSMSETILEQLEDFPKHKVRSRYVNNILGKDVYNGNASKGVFLANNGSRLLSEPEPSTHSVMHDRNDSAERFALHTGQTSTSGLLISSRDSHLDLRQGPGVSLGTGLVCNPERQGSAQIVLPLELRNKLNRILLATNERLVNAKTDMEDLIARLNQEIAVKDYLNKKVNDLEGELETTKQRSKENLEQAIMSERERFNQMQWDMEELRQKSYEMEMKLKSREDGSSHAEPTVQSTISEKHVLSKELDARKQQLEDLSRRYEELEAKSKADMKVLVKEVKSLRRSHVELEKELTHSLTDKTNAEKLLQEERKLLENTVAARKKLLSDCRILHDRLKEYNLNLSMDGNGNFVDDSTTISDVLRLLSISDDQIEEAQLLSGFDENAAAEDIDKTLSMDTETRIMEDELRKILANIFVENAKLRKQVNSAMLRALQKDVKTTEDVNEENSDEKDEASRETLKR</sequence>